<feature type="signal peptide" evidence="1 3">
    <location>
        <begin position="1"/>
        <end position="20"/>
    </location>
</feature>
<feature type="chain" id="PRO_0000295612" description="Photosystem II extrinsic protein V">
    <location>
        <begin position="21"/>
        <end position="155"/>
    </location>
</feature>
<feature type="binding site" description="covalent" evidence="1">
    <location>
        <position position="50"/>
    </location>
    <ligand>
        <name>heme c</name>
        <dbReference type="ChEBI" id="CHEBI:61717"/>
    </ligand>
</feature>
<feature type="binding site" description="covalent" evidence="1">
    <location>
        <position position="53"/>
    </location>
    <ligand>
        <name>heme c</name>
        <dbReference type="ChEBI" id="CHEBI:61717"/>
    </ligand>
</feature>
<feature type="binding site" description="axial binding residue" evidence="1">
    <location>
        <position position="54"/>
    </location>
    <ligand>
        <name>heme c</name>
        <dbReference type="ChEBI" id="CHEBI:61717"/>
    </ligand>
    <ligandPart>
        <name>Fe</name>
        <dbReference type="ChEBI" id="CHEBI:18248"/>
    </ligandPart>
</feature>
<feature type="binding site" description="axial binding residue" evidence="1">
    <location>
        <position position="105"/>
    </location>
    <ligand>
        <name>heme c</name>
        <dbReference type="ChEBI" id="CHEBI:61717"/>
    </ligand>
    <ligandPart>
        <name>Fe</name>
        <dbReference type="ChEBI" id="CHEBI:18248"/>
    </ligandPart>
</feature>
<feature type="sequence conflict" description="In Ref. 2; AA sequence." evidence="6" ref="2">
    <original>S</original>
    <variation>D</variation>
    <location>
        <position position="52"/>
    </location>
</feature>
<geneLocation type="chloroplast"/>
<protein>
    <recommendedName>
        <fullName evidence="1">Photosystem II extrinsic protein V</fullName>
        <shortName evidence="1">PsbV</shortName>
    </recommendedName>
    <alternativeName>
        <fullName evidence="1 5">Cytochrome c-550</fullName>
    </alternativeName>
    <alternativeName>
        <fullName evidence="1 4">Cytochrome c550</fullName>
    </alternativeName>
</protein>
<reference key="1">
    <citation type="journal article" date="2003" name="Plant Cell Physiol.">
        <title>Comparison of binding and functional properties of two extrinsic components, cyt c550 and a 12 kDa protein, in cyanobacterial PSII with those in red algal PSII.</title>
        <authorList>
            <person name="Enami I."/>
            <person name="Iwai M."/>
            <person name="Akiyama A."/>
            <person name="Suzuki T."/>
            <person name="Okumura A."/>
            <person name="Katoh T."/>
            <person name="Tada O."/>
            <person name="Ohta H."/>
            <person name="Shen J.-R."/>
        </authorList>
    </citation>
    <scope>NUCLEOTIDE SEQUENCE [GENOMIC DNA]</scope>
    <scope>SUBUNIT</scope>
    <scope>RECONSTITUTION EXPERIMENTS</scope>
    <source>
        <strain>RK-1</strain>
    </source>
</reference>
<reference key="2">
    <citation type="journal article" date="1995" name="Biochim. Biophys. Acta">
        <title>Isolation and characterization of a Photosystem II complex from the red alga Cyanidium caldarium: association of cytochrome c-550 and a 12 kDa protein with the complex.</title>
        <authorList>
            <person name="Enami I."/>
            <person name="Murayama H."/>
            <person name="Ohta H."/>
            <person name="Kamo M."/>
            <person name="Nakazato K."/>
            <person name="Shen J.-R."/>
        </authorList>
    </citation>
    <scope>NUCLEOTIDE SEQUENCE [GENOMIC DNA]</scope>
    <scope>PROTEIN SEQUENCE OF 21-54</scope>
    <scope>FUNCTION</scope>
    <scope>SUBUNIT</scope>
    <scope>SUBCELLULAR LOCATION</scope>
    <scope>ASSOCIATION WITH PHOTOSYSTEM II</scope>
    <source>
        <strain>RK-1</strain>
    </source>
</reference>
<dbReference type="EMBL" id="AB105371">
    <property type="protein sequence ID" value="BAC84949.1"/>
    <property type="molecule type" value="mRNA"/>
</dbReference>
<dbReference type="PDB" id="4YUU">
    <property type="method" value="X-ray"/>
    <property type="resolution" value="2.77 A"/>
    <property type="chains" value="V1/V2/v1/v2=1-155"/>
</dbReference>
<dbReference type="PDBsum" id="4YUU"/>
<dbReference type="SMR" id="Q76FB0"/>
<dbReference type="GO" id="GO:0009535">
    <property type="term" value="C:chloroplast thylakoid membrane"/>
    <property type="evidence" value="ECO:0007669"/>
    <property type="project" value="UniProtKB-SubCell"/>
</dbReference>
<dbReference type="GO" id="GO:0009523">
    <property type="term" value="C:photosystem II"/>
    <property type="evidence" value="ECO:0007669"/>
    <property type="project" value="UniProtKB-KW"/>
</dbReference>
<dbReference type="GO" id="GO:0009055">
    <property type="term" value="F:electron transfer activity"/>
    <property type="evidence" value="ECO:0007669"/>
    <property type="project" value="InterPro"/>
</dbReference>
<dbReference type="GO" id="GO:0020037">
    <property type="term" value="F:heme binding"/>
    <property type="evidence" value="ECO:0007669"/>
    <property type="project" value="InterPro"/>
</dbReference>
<dbReference type="GO" id="GO:0005506">
    <property type="term" value="F:iron ion binding"/>
    <property type="evidence" value="ECO:0007669"/>
    <property type="project" value="InterPro"/>
</dbReference>
<dbReference type="GO" id="GO:0019684">
    <property type="term" value="P:photosynthesis, light reaction"/>
    <property type="evidence" value="ECO:0007669"/>
    <property type="project" value="UniProtKB-UniRule"/>
</dbReference>
<dbReference type="GO" id="GO:0022904">
    <property type="term" value="P:respiratory electron transport chain"/>
    <property type="evidence" value="ECO:0007669"/>
    <property type="project" value="InterPro"/>
</dbReference>
<dbReference type="Gene3D" id="1.10.760.10">
    <property type="entry name" value="Cytochrome c-like domain"/>
    <property type="match status" value="1"/>
</dbReference>
<dbReference type="HAMAP" id="MF_01378">
    <property type="entry name" value="PSII_Cyt550"/>
    <property type="match status" value="1"/>
</dbReference>
<dbReference type="InterPro" id="IPR009056">
    <property type="entry name" value="Cyt_c-like_dom"/>
</dbReference>
<dbReference type="InterPro" id="IPR036909">
    <property type="entry name" value="Cyt_c-like_dom_sf"/>
</dbReference>
<dbReference type="InterPro" id="IPR029490">
    <property type="entry name" value="Cytochrom_C550"/>
</dbReference>
<dbReference type="InterPro" id="IPR017851">
    <property type="entry name" value="PsbV_cyt_c550"/>
</dbReference>
<dbReference type="InterPro" id="IPR016003">
    <property type="entry name" value="PsbV_cyt_c550-like"/>
</dbReference>
<dbReference type="NCBIfam" id="TIGR03045">
    <property type="entry name" value="PS_II_C550"/>
    <property type="match status" value="1"/>
</dbReference>
<dbReference type="Pfam" id="PF14495">
    <property type="entry name" value="Cytochrom_C550"/>
    <property type="match status" value="1"/>
</dbReference>
<dbReference type="PIRSF" id="PIRSF005890">
    <property type="entry name" value="Phot_II_cyt_c550"/>
    <property type="match status" value="1"/>
</dbReference>
<dbReference type="SUPFAM" id="SSF46626">
    <property type="entry name" value="Cytochrome c"/>
    <property type="match status" value="1"/>
</dbReference>
<dbReference type="PROSITE" id="PS51007">
    <property type="entry name" value="CYTC"/>
    <property type="match status" value="1"/>
</dbReference>
<proteinExistence type="evidence at protein level"/>
<gene>
    <name evidence="1 4" type="primary">psbV</name>
</gene>
<name>C550B_CYACA</name>
<organism>
    <name type="scientific">Cyanidium caldarium</name>
    <name type="common">Red alga</name>
    <dbReference type="NCBI Taxonomy" id="2771"/>
    <lineage>
        <taxon>Eukaryota</taxon>
        <taxon>Rhodophyta</taxon>
        <taxon>Bangiophyceae</taxon>
        <taxon>Cyanidiales</taxon>
        <taxon>Cyanidiaceae</taxon>
        <taxon>Cyanidium</taxon>
    </lineage>
</organism>
<sequence length="155" mass="17221">MFVKMIGWLVLFLFAHQTWAIEVAKDTNGGILNIAPEQLKRGKRLFNSHCSSCHVGGITKTNPNIGLDLESLSLATPPRNNLDALVDYMKNPTTYDGSESIAQIHPSIASSDIFPKMRDLSEDDLYAIAAHILTQPQIQAEKWGGGKIYYTKRSM</sequence>
<comment type="function">
    <text evidence="3">One of the extrinsic, lumenal subunits of photosystem II (PSII). PSII is a light-driven water plastoquinone oxidoreductase, using light energy to abstract electrons from H(2)O, generating a proton gradient subsequently used for ATP formation. The extrinsic proteins stabilize the structure of photosystem II oxygen-evolving complex (OEC), the ion environment of oxygen evolution and protect the OEC against heat-induced inactivation (PubMed:8534673). Unlike the T.vulcanus ortholog, it does not bind by itself to PSII, but requires all extrinsic members of the OEC (PubMed:8534673).</text>
</comment>
<comment type="cofactor">
    <cofactor evidence="1">
        <name>heme c</name>
        <dbReference type="ChEBI" id="CHEBI:61717"/>
    </cofactor>
    <text evidence="1">Binds 1 heme c group covalently per subunit.</text>
</comment>
<comment type="subunit">
    <text evidence="2 3 7">PSII is composed of 1 copy each of membrane proteins PsbA, PsbB, PsbC, PsbD, PsbE, PsbF, PsbH, PsbI, PsbJ, PsbK, PsbL, PsbM, PsbT, PsbY, PsbZ, Psb30/Ycf12, at least 3 peripheral proteins of the oxygen-evolving complex and a large number of cofactors. It forms dimeric complexes (Probable) (PubMed:8534673). The extrinsic subunits in red algae are PsbO (OEC33), PsbQ', cytochrome c-550 and PsbU (PubMed:12941874, PubMed:8534673).</text>
</comment>
<comment type="subcellular location">
    <subcellularLocation>
        <location evidence="1 3">Plastid</location>
        <location evidence="1 3">Chloroplast thylakoid membrane</location>
        <topology evidence="1 3">Peripheral membrane protein</topology>
        <orientation evidence="1 3">Lumenal side</orientation>
    </subcellularLocation>
    <text>Associated with photosystem II at the lumenal side of the thylakoid membrane.</text>
</comment>
<comment type="similarity">
    <text evidence="1">Belongs to the cytochrome c family. PsbV subfamily.</text>
</comment>
<comment type="caution">
    <text evidence="8">The RK-1 strain used in this study does not seem to be the same one studied in Germany (AC Q9TLW2).</text>
</comment>
<evidence type="ECO:0000255" key="1">
    <source>
        <dbReference type="HAMAP-Rule" id="MF_01378"/>
    </source>
</evidence>
<evidence type="ECO:0000269" key="2">
    <source>
    </source>
</evidence>
<evidence type="ECO:0000269" key="3">
    <source>
    </source>
</evidence>
<evidence type="ECO:0000303" key="4">
    <source>
    </source>
</evidence>
<evidence type="ECO:0000303" key="5">
    <source>
    </source>
</evidence>
<evidence type="ECO:0000305" key="6"/>
<evidence type="ECO:0000305" key="7">
    <source>
    </source>
</evidence>
<evidence type="ECO:0000305" key="8">
    <source>
    </source>
</evidence>
<keyword id="KW-0002">3D-structure</keyword>
<keyword id="KW-0150">Chloroplast</keyword>
<keyword id="KW-0903">Direct protein sequencing</keyword>
<keyword id="KW-0249">Electron transport</keyword>
<keyword id="KW-0349">Heme</keyword>
<keyword id="KW-0408">Iron</keyword>
<keyword id="KW-0472">Membrane</keyword>
<keyword id="KW-0479">Metal-binding</keyword>
<keyword id="KW-0602">Photosynthesis</keyword>
<keyword id="KW-0604">Photosystem II</keyword>
<keyword id="KW-0934">Plastid</keyword>
<keyword id="KW-0732">Signal</keyword>
<keyword id="KW-0793">Thylakoid</keyword>
<keyword id="KW-0813">Transport</keyword>
<accession>Q76FB0</accession>